<comment type="function">
    <text evidence="1">This enzyme scavenges exogenous and endogenous cytidine and 2'-deoxycytidine for UMP synthesis.</text>
</comment>
<comment type="catalytic activity">
    <reaction>
        <text>cytidine + H2O + H(+) = uridine + NH4(+)</text>
        <dbReference type="Rhea" id="RHEA:16069"/>
        <dbReference type="ChEBI" id="CHEBI:15377"/>
        <dbReference type="ChEBI" id="CHEBI:15378"/>
        <dbReference type="ChEBI" id="CHEBI:16704"/>
        <dbReference type="ChEBI" id="CHEBI:17562"/>
        <dbReference type="ChEBI" id="CHEBI:28938"/>
        <dbReference type="EC" id="3.5.4.5"/>
    </reaction>
</comment>
<comment type="catalytic activity">
    <reaction>
        <text>2'-deoxycytidine + H2O + H(+) = 2'-deoxyuridine + NH4(+)</text>
        <dbReference type="Rhea" id="RHEA:13433"/>
        <dbReference type="ChEBI" id="CHEBI:15377"/>
        <dbReference type="ChEBI" id="CHEBI:15378"/>
        <dbReference type="ChEBI" id="CHEBI:15698"/>
        <dbReference type="ChEBI" id="CHEBI:16450"/>
        <dbReference type="ChEBI" id="CHEBI:28938"/>
        <dbReference type="EC" id="3.5.4.5"/>
    </reaction>
</comment>
<comment type="cofactor">
    <cofactor evidence="1">
        <name>Zn(2+)</name>
        <dbReference type="ChEBI" id="CHEBI:29105"/>
    </cofactor>
    <text evidence="1">Binds 1 zinc ion per subunit.</text>
</comment>
<comment type="subunit">
    <text evidence="1">Homodimer.</text>
</comment>
<comment type="similarity">
    <text evidence="3">Belongs to the cytidine and deoxycytidylate deaminase family.</text>
</comment>
<comment type="sequence caution" evidence="3">
    <conflict type="erroneous initiation">
        <sequence resource="EMBL-CDS" id="AAC69565"/>
    </conflict>
    <text>Extended N-terminus.</text>
</comment>
<comment type="sequence caution" evidence="3">
    <conflict type="miscellaneous discrepancy">
        <sequence resource="EMBL-CDS" id="AAD30443"/>
    </conflict>
    <text>Sequencing errors.</text>
</comment>
<name>CDA7_ARATH</name>
<gene>
    <name type="primary">CDA7</name>
    <name type="synonym">DESC</name>
    <name type="ordered locus">At4g29600</name>
    <name type="ORF">T16L4.110</name>
</gene>
<dbReference type="EC" id="3.5.4.5"/>
<dbReference type="EMBL" id="AF121877">
    <property type="protein sequence ID" value="AAD30443.1"/>
    <property type="status" value="ALT_SEQ"/>
    <property type="molecule type" value="Genomic_DNA"/>
</dbReference>
<dbReference type="EMBL" id="AF080676">
    <property type="protein sequence ID" value="AAC69565.1"/>
    <property type="status" value="ALT_INIT"/>
    <property type="molecule type" value="Genomic_DNA"/>
</dbReference>
<dbReference type="EMBL" id="AL079344">
    <property type="protein sequence ID" value="CAB45320.1"/>
    <property type="molecule type" value="Genomic_DNA"/>
</dbReference>
<dbReference type="EMBL" id="AL161575">
    <property type="protein sequence ID" value="CAB79718.1"/>
    <property type="molecule type" value="Genomic_DNA"/>
</dbReference>
<dbReference type="EMBL" id="CP002687">
    <property type="protein sequence ID" value="AEE85650.1"/>
    <property type="molecule type" value="Genomic_DNA"/>
</dbReference>
<dbReference type="EMBL" id="DQ056661">
    <property type="protein sequence ID" value="AAY78808.1"/>
    <property type="molecule type" value="mRNA"/>
</dbReference>
<dbReference type="PIR" id="T09923">
    <property type="entry name" value="T09923"/>
</dbReference>
<dbReference type="RefSeq" id="NP_194689.1">
    <property type="nucleotide sequence ID" value="NM_119105.2"/>
</dbReference>
<dbReference type="SMR" id="Q9SU87"/>
<dbReference type="FunCoup" id="Q9SU87">
    <property type="interactions" value="135"/>
</dbReference>
<dbReference type="STRING" id="3702.Q9SU87"/>
<dbReference type="iPTMnet" id="Q9SU87"/>
<dbReference type="PaxDb" id="3702-AT4G29600.1"/>
<dbReference type="EnsemblPlants" id="AT4G29600.1">
    <property type="protein sequence ID" value="AT4G29600.1"/>
    <property type="gene ID" value="AT4G29600"/>
</dbReference>
<dbReference type="GeneID" id="829081"/>
<dbReference type="Gramene" id="AT4G29600.1">
    <property type="protein sequence ID" value="AT4G29600.1"/>
    <property type="gene ID" value="AT4G29600"/>
</dbReference>
<dbReference type="KEGG" id="ath:AT4G29600"/>
<dbReference type="Araport" id="AT4G29600"/>
<dbReference type="TAIR" id="AT4G29600"/>
<dbReference type="eggNOG" id="KOG0833">
    <property type="taxonomic scope" value="Eukaryota"/>
</dbReference>
<dbReference type="HOGENOM" id="CLU_052424_1_0_1"/>
<dbReference type="InParanoid" id="Q9SU87"/>
<dbReference type="OMA" id="CIEFGAP"/>
<dbReference type="PRO" id="PR:Q9SU87"/>
<dbReference type="Proteomes" id="UP000006548">
    <property type="component" value="Chromosome 4"/>
</dbReference>
<dbReference type="ExpressionAtlas" id="Q9SU87">
    <property type="expression patterns" value="baseline and differential"/>
</dbReference>
<dbReference type="GO" id="GO:0004126">
    <property type="term" value="F:cytidine deaminase activity"/>
    <property type="evidence" value="ECO:0007669"/>
    <property type="project" value="UniProtKB-EC"/>
</dbReference>
<dbReference type="GO" id="GO:0008270">
    <property type="term" value="F:zinc ion binding"/>
    <property type="evidence" value="ECO:0007669"/>
    <property type="project" value="InterPro"/>
</dbReference>
<dbReference type="GO" id="GO:0009972">
    <property type="term" value="P:cytidine deamination"/>
    <property type="evidence" value="ECO:0007669"/>
    <property type="project" value="InterPro"/>
</dbReference>
<dbReference type="CDD" id="cd01283">
    <property type="entry name" value="cytidine_deaminase"/>
    <property type="match status" value="1"/>
</dbReference>
<dbReference type="FunFam" id="3.40.140.10:FF:000006">
    <property type="entry name" value="Cytidine deaminase"/>
    <property type="match status" value="1"/>
</dbReference>
<dbReference type="FunFam" id="3.40.140.10:FF:000041">
    <property type="entry name" value="Cytidine deaminase"/>
    <property type="match status" value="1"/>
</dbReference>
<dbReference type="Gene3D" id="3.40.140.10">
    <property type="entry name" value="Cytidine Deaminase, domain 2"/>
    <property type="match status" value="2"/>
</dbReference>
<dbReference type="InterPro" id="IPR002125">
    <property type="entry name" value="CMP_dCMP_dom"/>
</dbReference>
<dbReference type="InterPro" id="IPR013171">
    <property type="entry name" value="Cyd/dCyd_deaminase_Zn-bd"/>
</dbReference>
<dbReference type="InterPro" id="IPR050202">
    <property type="entry name" value="Cyt/Deoxycyt_deaminase"/>
</dbReference>
<dbReference type="InterPro" id="IPR006263">
    <property type="entry name" value="Cyt_deam_dimer"/>
</dbReference>
<dbReference type="InterPro" id="IPR016193">
    <property type="entry name" value="Cytidine_deaminase-like"/>
</dbReference>
<dbReference type="NCBIfam" id="TIGR01355">
    <property type="entry name" value="cyt_deam_dimer"/>
    <property type="match status" value="1"/>
</dbReference>
<dbReference type="NCBIfam" id="NF006537">
    <property type="entry name" value="PRK09027.1"/>
    <property type="match status" value="1"/>
</dbReference>
<dbReference type="PANTHER" id="PTHR11644">
    <property type="entry name" value="CYTIDINE DEAMINASE"/>
    <property type="match status" value="1"/>
</dbReference>
<dbReference type="PANTHER" id="PTHR11644:SF2">
    <property type="entry name" value="CYTIDINE DEAMINASE"/>
    <property type="match status" value="1"/>
</dbReference>
<dbReference type="Pfam" id="PF00383">
    <property type="entry name" value="dCMP_cyt_deam_1"/>
    <property type="match status" value="1"/>
</dbReference>
<dbReference type="Pfam" id="PF08211">
    <property type="entry name" value="dCMP_cyt_deam_2"/>
    <property type="match status" value="1"/>
</dbReference>
<dbReference type="PIRSF" id="PIRSF006334">
    <property type="entry name" value="Cdd_plus_pseudo"/>
    <property type="match status" value="1"/>
</dbReference>
<dbReference type="SUPFAM" id="SSF53927">
    <property type="entry name" value="Cytidine deaminase-like"/>
    <property type="match status" value="2"/>
</dbReference>
<dbReference type="PROSITE" id="PS51747">
    <property type="entry name" value="CYT_DCMP_DEAMINASES_2"/>
    <property type="match status" value="2"/>
</dbReference>
<protein>
    <recommendedName>
        <fullName>Cytidine deaminase 7</fullName>
        <ecNumber>3.5.4.5</ecNumber>
    </recommendedName>
</protein>
<accession>Q9SU87</accession>
<accession>Q4PSH5</accession>
<accession>Q9SYU5</accession>
<accession>Q9ZT35</accession>
<feature type="chain" id="PRO_0000429149" description="Cytidine deaminase 7">
    <location>
        <begin position="1"/>
        <end position="307"/>
    </location>
</feature>
<feature type="domain" description="CMP/dCMP-type deaminase 1" evidence="2">
    <location>
        <begin position="22"/>
        <end position="155"/>
    </location>
</feature>
<feature type="domain" description="CMP/dCMP-type deaminase 2" evidence="2">
    <location>
        <begin position="185"/>
        <end position="307"/>
    </location>
</feature>
<feature type="active site" description="Proton donor" evidence="1">
    <location>
        <position position="78"/>
    </location>
</feature>
<feature type="binding site" evidence="1">
    <location>
        <begin position="63"/>
        <end position="65"/>
    </location>
    <ligand>
        <name>substrate</name>
    </ligand>
</feature>
<feature type="binding site" evidence="1">
    <location>
        <position position="76"/>
    </location>
    <ligand>
        <name>Zn(2+)</name>
        <dbReference type="ChEBI" id="CHEBI:29105"/>
        <note>catalytic</note>
    </ligand>
</feature>
<feature type="binding site" evidence="1">
    <location>
        <position position="111"/>
    </location>
    <ligand>
        <name>Zn(2+)</name>
        <dbReference type="ChEBI" id="CHEBI:29105"/>
        <note>catalytic</note>
    </ligand>
</feature>
<feature type="binding site" evidence="1">
    <location>
        <position position="114"/>
    </location>
    <ligand>
        <name>Zn(2+)</name>
        <dbReference type="ChEBI" id="CHEBI:29105"/>
        <note>catalytic</note>
    </ligand>
</feature>
<feature type="sequence conflict" description="In Ref. 5; AAY78808." evidence="3" ref="5">
    <original>A</original>
    <variation>E</variation>
    <location>
        <position position="3"/>
    </location>
</feature>
<proteinExistence type="evidence at transcript level"/>
<evidence type="ECO:0000250" key="1"/>
<evidence type="ECO:0000255" key="2">
    <source>
        <dbReference type="PROSITE-ProRule" id="PRU01083"/>
    </source>
</evidence>
<evidence type="ECO:0000305" key="3"/>
<sequence>MAAQDKYKFVFTAKEAASEGVTEPIRLPKLIRKAMSLARGPISKYKVGAVGRASSGRVYLGVNVEFPGLPLHHSIHPEQFLVTNLALNSEKGLRQLAVAISSDCIEFGAPCGNCRQFLMETSNELDIKILLKSKHEAEGSFSSLKLLLPYRFTPDDVLPKGSPLLLEKRDNCLTLSGSTEEICSSDCSHLKCKALAAANNSFSPYTESPSGVALQDDEGKWYRGWYIESVAYSPSLGPVQAALVDFVARSRGKGFNKIVEAVLVEKNNARVSQERTAKMILDTIAAPNCDFKVFHCYVDLQKKFITE</sequence>
<keyword id="KW-0378">Hydrolase</keyword>
<keyword id="KW-0479">Metal-binding</keyword>
<keyword id="KW-1185">Reference proteome</keyword>
<keyword id="KW-0862">Zinc</keyword>
<reference key="1">
    <citation type="submission" date="1999-01" db="EMBL/GenBank/DDBJ databases">
        <title>Cytidine deaminases in Arabidopsis thaliana: a gene family of eight members are located within a 24 kb region.</title>
        <authorList>
            <person name="Sanchez H."/>
            <person name="Schuster W."/>
        </authorList>
    </citation>
    <scope>NUCLEOTIDE SEQUENCE [GENOMIC DNA]</scope>
    <source>
        <strain>cv. Columbia</strain>
    </source>
</reference>
<reference key="2">
    <citation type="submission" date="1999-06" db="EMBL/GenBank/DDBJ databases">
        <title>Cloning and characterisation of a cytidine deaminase gene family from Arabidopsis thaliana.</title>
        <authorList>
            <person name="Faivre-Nitschke S.E."/>
            <person name="Grienenberger J.M."/>
            <person name="Gualberto J.M."/>
        </authorList>
    </citation>
    <scope>NUCLEOTIDE SEQUENCE [GENOMIC DNA]</scope>
    <source>
        <strain>cv. Landsberg erecta</strain>
    </source>
</reference>
<reference key="3">
    <citation type="journal article" date="1999" name="Nature">
        <title>Sequence and analysis of chromosome 4 of the plant Arabidopsis thaliana.</title>
        <authorList>
            <person name="Mayer K.F.X."/>
            <person name="Schueller C."/>
            <person name="Wambutt R."/>
            <person name="Murphy G."/>
            <person name="Volckaert G."/>
            <person name="Pohl T."/>
            <person name="Duesterhoeft A."/>
            <person name="Stiekema W."/>
            <person name="Entian K.-D."/>
            <person name="Terryn N."/>
            <person name="Harris B."/>
            <person name="Ansorge W."/>
            <person name="Brandt P."/>
            <person name="Grivell L.A."/>
            <person name="Rieger M."/>
            <person name="Weichselgartner M."/>
            <person name="de Simone V."/>
            <person name="Obermaier B."/>
            <person name="Mache R."/>
            <person name="Mueller M."/>
            <person name="Kreis M."/>
            <person name="Delseny M."/>
            <person name="Puigdomenech P."/>
            <person name="Watson M."/>
            <person name="Schmidtheini T."/>
            <person name="Reichert B."/>
            <person name="Portetelle D."/>
            <person name="Perez-Alonso M."/>
            <person name="Boutry M."/>
            <person name="Bancroft I."/>
            <person name="Vos P."/>
            <person name="Hoheisel J."/>
            <person name="Zimmermann W."/>
            <person name="Wedler H."/>
            <person name="Ridley P."/>
            <person name="Langham S.-A."/>
            <person name="McCullagh B."/>
            <person name="Bilham L."/>
            <person name="Robben J."/>
            <person name="van der Schueren J."/>
            <person name="Grymonprez B."/>
            <person name="Chuang Y.-J."/>
            <person name="Vandenbussche F."/>
            <person name="Braeken M."/>
            <person name="Weltjens I."/>
            <person name="Voet M."/>
            <person name="Bastiaens I."/>
            <person name="Aert R."/>
            <person name="Defoor E."/>
            <person name="Weitzenegger T."/>
            <person name="Bothe G."/>
            <person name="Ramsperger U."/>
            <person name="Hilbert H."/>
            <person name="Braun M."/>
            <person name="Holzer E."/>
            <person name="Brandt A."/>
            <person name="Peters S."/>
            <person name="van Staveren M."/>
            <person name="Dirkse W."/>
            <person name="Mooijman P."/>
            <person name="Klein Lankhorst R."/>
            <person name="Rose M."/>
            <person name="Hauf J."/>
            <person name="Koetter P."/>
            <person name="Berneiser S."/>
            <person name="Hempel S."/>
            <person name="Feldpausch M."/>
            <person name="Lamberth S."/>
            <person name="Van den Daele H."/>
            <person name="De Keyser A."/>
            <person name="Buysshaert C."/>
            <person name="Gielen J."/>
            <person name="Villarroel R."/>
            <person name="De Clercq R."/>
            <person name="van Montagu M."/>
            <person name="Rogers J."/>
            <person name="Cronin A."/>
            <person name="Quail M.A."/>
            <person name="Bray-Allen S."/>
            <person name="Clark L."/>
            <person name="Doggett J."/>
            <person name="Hall S."/>
            <person name="Kay M."/>
            <person name="Lennard N."/>
            <person name="McLay K."/>
            <person name="Mayes R."/>
            <person name="Pettett A."/>
            <person name="Rajandream M.A."/>
            <person name="Lyne M."/>
            <person name="Benes V."/>
            <person name="Rechmann S."/>
            <person name="Borkova D."/>
            <person name="Bloecker H."/>
            <person name="Scharfe M."/>
            <person name="Grimm M."/>
            <person name="Loehnert T.-H."/>
            <person name="Dose S."/>
            <person name="de Haan M."/>
            <person name="Maarse A.C."/>
            <person name="Schaefer M."/>
            <person name="Mueller-Auer S."/>
            <person name="Gabel C."/>
            <person name="Fuchs M."/>
            <person name="Fartmann B."/>
            <person name="Granderath K."/>
            <person name="Dauner D."/>
            <person name="Herzl A."/>
            <person name="Neumann S."/>
            <person name="Argiriou A."/>
            <person name="Vitale D."/>
            <person name="Liguori R."/>
            <person name="Piravandi E."/>
            <person name="Massenet O."/>
            <person name="Quigley F."/>
            <person name="Clabauld G."/>
            <person name="Muendlein A."/>
            <person name="Felber R."/>
            <person name="Schnabl S."/>
            <person name="Hiller R."/>
            <person name="Schmidt W."/>
            <person name="Lecharny A."/>
            <person name="Aubourg S."/>
            <person name="Chefdor F."/>
            <person name="Cooke R."/>
            <person name="Berger C."/>
            <person name="Monfort A."/>
            <person name="Casacuberta E."/>
            <person name="Gibbons T."/>
            <person name="Weber N."/>
            <person name="Vandenbol M."/>
            <person name="Bargues M."/>
            <person name="Terol J."/>
            <person name="Torres A."/>
            <person name="Perez-Perez A."/>
            <person name="Purnelle B."/>
            <person name="Bent E."/>
            <person name="Johnson S."/>
            <person name="Tacon D."/>
            <person name="Jesse T."/>
            <person name="Heijnen L."/>
            <person name="Schwarz S."/>
            <person name="Scholler P."/>
            <person name="Heber S."/>
            <person name="Francs P."/>
            <person name="Bielke C."/>
            <person name="Frishman D."/>
            <person name="Haase D."/>
            <person name="Lemcke K."/>
            <person name="Mewes H.-W."/>
            <person name="Stocker S."/>
            <person name="Zaccaria P."/>
            <person name="Bevan M."/>
            <person name="Wilson R.K."/>
            <person name="de la Bastide M."/>
            <person name="Habermann K."/>
            <person name="Parnell L."/>
            <person name="Dedhia N."/>
            <person name="Gnoj L."/>
            <person name="Schutz K."/>
            <person name="Huang E."/>
            <person name="Spiegel L."/>
            <person name="Sekhon M."/>
            <person name="Murray J."/>
            <person name="Sheet P."/>
            <person name="Cordes M."/>
            <person name="Abu-Threideh J."/>
            <person name="Stoneking T."/>
            <person name="Kalicki J."/>
            <person name="Graves T."/>
            <person name="Harmon G."/>
            <person name="Edwards J."/>
            <person name="Latreille P."/>
            <person name="Courtney L."/>
            <person name="Cloud J."/>
            <person name="Abbott A."/>
            <person name="Scott K."/>
            <person name="Johnson D."/>
            <person name="Minx P."/>
            <person name="Bentley D."/>
            <person name="Fulton B."/>
            <person name="Miller N."/>
            <person name="Greco T."/>
            <person name="Kemp K."/>
            <person name="Kramer J."/>
            <person name="Fulton L."/>
            <person name="Mardis E."/>
            <person name="Dante M."/>
            <person name="Pepin K."/>
            <person name="Hillier L.W."/>
            <person name="Nelson J."/>
            <person name="Spieth J."/>
            <person name="Ryan E."/>
            <person name="Andrews S."/>
            <person name="Geisel C."/>
            <person name="Layman D."/>
            <person name="Du H."/>
            <person name="Ali J."/>
            <person name="Berghoff A."/>
            <person name="Jones K."/>
            <person name="Drone K."/>
            <person name="Cotton M."/>
            <person name="Joshu C."/>
            <person name="Antonoiu B."/>
            <person name="Zidanic M."/>
            <person name="Strong C."/>
            <person name="Sun H."/>
            <person name="Lamar B."/>
            <person name="Yordan C."/>
            <person name="Ma P."/>
            <person name="Zhong J."/>
            <person name="Preston R."/>
            <person name="Vil D."/>
            <person name="Shekher M."/>
            <person name="Matero A."/>
            <person name="Shah R."/>
            <person name="Swaby I.K."/>
            <person name="O'Shaughnessy A."/>
            <person name="Rodriguez M."/>
            <person name="Hoffman J."/>
            <person name="Till S."/>
            <person name="Granat S."/>
            <person name="Shohdy N."/>
            <person name="Hasegawa A."/>
            <person name="Hameed A."/>
            <person name="Lodhi M."/>
            <person name="Johnson A."/>
            <person name="Chen E."/>
            <person name="Marra M.A."/>
            <person name="Martienssen R."/>
            <person name="McCombie W.R."/>
        </authorList>
    </citation>
    <scope>NUCLEOTIDE SEQUENCE [LARGE SCALE GENOMIC DNA]</scope>
    <source>
        <strain>cv. Columbia</strain>
    </source>
</reference>
<reference key="4">
    <citation type="journal article" date="2017" name="Plant J.">
        <title>Araport11: a complete reannotation of the Arabidopsis thaliana reference genome.</title>
        <authorList>
            <person name="Cheng C.Y."/>
            <person name="Krishnakumar V."/>
            <person name="Chan A.P."/>
            <person name="Thibaud-Nissen F."/>
            <person name="Schobel S."/>
            <person name="Town C.D."/>
        </authorList>
    </citation>
    <scope>GENOME REANNOTATION</scope>
    <source>
        <strain>cv. Columbia</strain>
    </source>
</reference>
<reference key="5">
    <citation type="journal article" date="2006" name="Plant Biotechnol. J.">
        <title>Simultaneous high-throughput recombinational cloning of open reading frames in closed and open configurations.</title>
        <authorList>
            <person name="Underwood B.A."/>
            <person name="Vanderhaeghen R."/>
            <person name="Whitford R."/>
            <person name="Town C.D."/>
            <person name="Hilson P."/>
        </authorList>
    </citation>
    <scope>NUCLEOTIDE SEQUENCE [LARGE SCALE MRNA]</scope>
    <source>
        <strain>cv. Columbia</strain>
    </source>
</reference>
<organism>
    <name type="scientific">Arabidopsis thaliana</name>
    <name type="common">Mouse-ear cress</name>
    <dbReference type="NCBI Taxonomy" id="3702"/>
    <lineage>
        <taxon>Eukaryota</taxon>
        <taxon>Viridiplantae</taxon>
        <taxon>Streptophyta</taxon>
        <taxon>Embryophyta</taxon>
        <taxon>Tracheophyta</taxon>
        <taxon>Spermatophyta</taxon>
        <taxon>Magnoliopsida</taxon>
        <taxon>eudicotyledons</taxon>
        <taxon>Gunneridae</taxon>
        <taxon>Pentapetalae</taxon>
        <taxon>rosids</taxon>
        <taxon>malvids</taxon>
        <taxon>Brassicales</taxon>
        <taxon>Brassicaceae</taxon>
        <taxon>Camelineae</taxon>
        <taxon>Arabidopsis</taxon>
    </lineage>
</organism>